<proteinExistence type="evidence at protein level"/>
<sequence length="257" mass="28575">MSVPAGSVSCLANALLNLRSSTDYNADHGVKNSILNFSNSKDASRFDGSESWSSSVLDKNQFIVAGSDSVKHFVAISTQGRGDHDQWVTSYKLRYTLDNVNWVEYNNGEIINANKDRNSIVTINFNPPIKARSIAIHPQTYNNHISLRWELYALPVKSYSNPSVQVGEVSIGDRSLNSGTGSRTIVRHVKFPVEFLSVPIVSIGCKKVDAHTDNGQMRWEGKSENITTKGFDLTFITWGNNAVYDLTFDYVAVEFNN</sequence>
<gene>
    <name type="primary">dscE</name>
    <name type="ORF">DDB_G0292552</name>
</gene>
<reference key="1">
    <citation type="journal article" date="1996" name="Plant Cell Physiol.">
        <title>Molecular cloning and characterization of the cDNA for discoidin II of Dictyostelium discoideum.</title>
        <authorList>
            <person name="Fukuzawa M."/>
            <person name="Ochiai H."/>
        </authorList>
    </citation>
    <scope>NUCLEOTIDE SEQUENCE [MRNA]</scope>
    <scope>PARTIAL PROTEIN SEQUENCE</scope>
    <source>
        <strain>AX2</strain>
    </source>
</reference>
<reference key="2">
    <citation type="journal article" date="2005" name="Nature">
        <title>The genome of the social amoeba Dictyostelium discoideum.</title>
        <authorList>
            <person name="Eichinger L."/>
            <person name="Pachebat J.A."/>
            <person name="Gloeckner G."/>
            <person name="Rajandream M.A."/>
            <person name="Sucgang R."/>
            <person name="Berriman M."/>
            <person name="Song J."/>
            <person name="Olsen R."/>
            <person name="Szafranski K."/>
            <person name="Xu Q."/>
            <person name="Tunggal B."/>
            <person name="Kummerfeld S."/>
            <person name="Madera M."/>
            <person name="Konfortov B.A."/>
            <person name="Rivero F."/>
            <person name="Bankier A.T."/>
            <person name="Lehmann R."/>
            <person name="Hamlin N."/>
            <person name="Davies R."/>
            <person name="Gaudet P."/>
            <person name="Fey P."/>
            <person name="Pilcher K."/>
            <person name="Chen G."/>
            <person name="Saunders D."/>
            <person name="Sodergren E.J."/>
            <person name="Davis P."/>
            <person name="Kerhornou A."/>
            <person name="Nie X."/>
            <person name="Hall N."/>
            <person name="Anjard C."/>
            <person name="Hemphill L."/>
            <person name="Bason N."/>
            <person name="Farbrother P."/>
            <person name="Desany B."/>
            <person name="Just E."/>
            <person name="Morio T."/>
            <person name="Rost R."/>
            <person name="Churcher C.M."/>
            <person name="Cooper J."/>
            <person name="Haydock S."/>
            <person name="van Driessche N."/>
            <person name="Cronin A."/>
            <person name="Goodhead I."/>
            <person name="Muzny D.M."/>
            <person name="Mourier T."/>
            <person name="Pain A."/>
            <person name="Lu M."/>
            <person name="Harper D."/>
            <person name="Lindsay R."/>
            <person name="Hauser H."/>
            <person name="James K.D."/>
            <person name="Quiles M."/>
            <person name="Madan Babu M."/>
            <person name="Saito T."/>
            <person name="Buchrieser C."/>
            <person name="Wardroper A."/>
            <person name="Felder M."/>
            <person name="Thangavelu M."/>
            <person name="Johnson D."/>
            <person name="Knights A."/>
            <person name="Loulseged H."/>
            <person name="Mungall K.L."/>
            <person name="Oliver K."/>
            <person name="Price C."/>
            <person name="Quail M.A."/>
            <person name="Urushihara H."/>
            <person name="Hernandez J."/>
            <person name="Rabbinowitsch E."/>
            <person name="Steffen D."/>
            <person name="Sanders M."/>
            <person name="Ma J."/>
            <person name="Kohara Y."/>
            <person name="Sharp S."/>
            <person name="Simmonds M.N."/>
            <person name="Spiegler S."/>
            <person name="Tivey A."/>
            <person name="Sugano S."/>
            <person name="White B."/>
            <person name="Walker D."/>
            <person name="Woodward J.R."/>
            <person name="Winckler T."/>
            <person name="Tanaka Y."/>
            <person name="Shaulsky G."/>
            <person name="Schleicher M."/>
            <person name="Weinstock G.M."/>
            <person name="Rosenthal A."/>
            <person name="Cox E.C."/>
            <person name="Chisholm R.L."/>
            <person name="Gibbs R.A."/>
            <person name="Loomis W.F."/>
            <person name="Platzer M."/>
            <person name="Kay R.R."/>
            <person name="Williams J.G."/>
            <person name="Dear P.H."/>
            <person name="Noegel A.A."/>
            <person name="Barrell B.G."/>
            <person name="Kuspa A."/>
        </authorList>
    </citation>
    <scope>NUCLEOTIDE SEQUENCE [LARGE SCALE GENOMIC DNA]</scope>
    <source>
        <strain>AX4</strain>
    </source>
</reference>
<reference key="3">
    <citation type="journal article" date="2006" name="Mol. Cell. Proteomics">
        <title>Proteomics fingerprinting of phagosome maturation and evidence for the role of a Galpha during uptake.</title>
        <authorList>
            <person name="Gotthardt D."/>
            <person name="Blancheteau V."/>
            <person name="Bosserhoff A."/>
            <person name="Ruppert T."/>
            <person name="Delorenzi M."/>
            <person name="Soldati T."/>
        </authorList>
    </citation>
    <scope>IDENTIFICATION BY MASS SPECTROMETRY [LARGE SCALE ANALYSIS]</scope>
    <source>
        <strain>AX2</strain>
    </source>
</reference>
<reference key="4">
    <citation type="journal article" date="2008" name="Proteins">
        <title>Structure determination of Discoidin II from Dictyostelium discoideum and carbohydrate binding properties of the lectin domain.</title>
        <authorList>
            <person name="Aragao K.S."/>
            <person name="Satre M."/>
            <person name="Imberty A."/>
            <person name="Varrot A."/>
        </authorList>
    </citation>
    <scope>X-RAY CRYSTALLOGRAPHY (1.75 ANGSTROMS) ALONE AND IN COMPLEX WITH MONOSACCHARIDES</scope>
    <scope>SUBUNIT</scope>
    <scope>CALCIUM-BINDING SITES</scope>
    <scope>PHOSPHORYLATION AT HIS-84</scope>
</reference>
<comment type="function">
    <text>Galactose-binding lectin. May be necessary for the primary process of spore formation and may be involved in spore coat formation.</text>
</comment>
<comment type="subunit">
    <text evidence="3">Homotrimer.</text>
</comment>
<comment type="tissue specificity">
    <text>Maturing spore cells.</text>
</comment>
<comment type="developmental stage">
    <text>Levels increase around 8 hours of development to reach maximal levels at 16 hours and a high expression is maintained during later development.</text>
</comment>
<comment type="PTM">
    <text>The N-terminus is blocked.</text>
</comment>
<dbReference type="EMBL" id="D29628">
    <property type="protein sequence ID" value="BAA06107.1"/>
    <property type="molecule type" value="mRNA"/>
</dbReference>
<dbReference type="EMBL" id="AAFI02000194">
    <property type="protein sequence ID" value="EAL61079.1"/>
    <property type="molecule type" value="Genomic_DNA"/>
</dbReference>
<dbReference type="RefSeq" id="XP_629549.1">
    <property type="nucleotide sequence ID" value="XM_629547.1"/>
</dbReference>
<dbReference type="PDB" id="2VM9">
    <property type="method" value="X-ray"/>
    <property type="resolution" value="1.75 A"/>
    <property type="chains" value="A=1-257"/>
</dbReference>
<dbReference type="PDB" id="2VMC">
    <property type="method" value="X-ray"/>
    <property type="resolution" value="1.90 A"/>
    <property type="chains" value="A=1-257"/>
</dbReference>
<dbReference type="PDB" id="2VMD">
    <property type="method" value="X-ray"/>
    <property type="resolution" value="1.90 A"/>
    <property type="chains" value="A=1-257"/>
</dbReference>
<dbReference type="PDB" id="2VME">
    <property type="method" value="X-ray"/>
    <property type="resolution" value="2.45 A"/>
    <property type="chains" value="A/B/C/D/E/F=1-257"/>
</dbReference>
<dbReference type="PDBsum" id="2VM9"/>
<dbReference type="PDBsum" id="2VMC"/>
<dbReference type="PDBsum" id="2VMD"/>
<dbReference type="PDBsum" id="2VME"/>
<dbReference type="SMR" id="P42530"/>
<dbReference type="FunCoup" id="P42530">
    <property type="interactions" value="6"/>
</dbReference>
<dbReference type="STRING" id="44689.P42530"/>
<dbReference type="UniLectin" id="P42530"/>
<dbReference type="iPTMnet" id="P42530"/>
<dbReference type="PaxDb" id="44689-DDB0215382"/>
<dbReference type="EnsemblProtists" id="EAL61079">
    <property type="protein sequence ID" value="EAL61079"/>
    <property type="gene ID" value="DDB_G0292552"/>
</dbReference>
<dbReference type="GeneID" id="8628807"/>
<dbReference type="KEGG" id="ddi:DDB_G0292552"/>
<dbReference type="dictyBase" id="DDB_G0292552">
    <property type="gene designation" value="dscE"/>
</dbReference>
<dbReference type="VEuPathDB" id="AmoebaDB:DDB_G0292552"/>
<dbReference type="eggNOG" id="KOG2649">
    <property type="taxonomic scope" value="Eukaryota"/>
</dbReference>
<dbReference type="HOGENOM" id="CLU_1100181_0_0_1"/>
<dbReference type="InParanoid" id="P42530"/>
<dbReference type="OMA" id="DNGQMRW"/>
<dbReference type="PhylomeDB" id="P42530"/>
<dbReference type="EvolutionaryTrace" id="P42530"/>
<dbReference type="PRO" id="PR:P42530"/>
<dbReference type="Proteomes" id="UP000002195">
    <property type="component" value="Chromosome 6"/>
</dbReference>
<dbReference type="GO" id="GO:0005737">
    <property type="term" value="C:cytoplasm"/>
    <property type="evidence" value="ECO:0000314"/>
    <property type="project" value="dictyBase"/>
</dbReference>
<dbReference type="GO" id="GO:0005829">
    <property type="term" value="C:cytosol"/>
    <property type="evidence" value="ECO:0000314"/>
    <property type="project" value="dictyBase"/>
</dbReference>
<dbReference type="GO" id="GO:0031012">
    <property type="term" value="C:extracellular matrix"/>
    <property type="evidence" value="ECO:0007005"/>
    <property type="project" value="dictyBase"/>
</dbReference>
<dbReference type="GO" id="GO:0045335">
    <property type="term" value="C:phagocytic vesicle"/>
    <property type="evidence" value="ECO:0007005"/>
    <property type="project" value="dictyBase"/>
</dbReference>
<dbReference type="GO" id="GO:0098636">
    <property type="term" value="C:protein complex involved in cell adhesion"/>
    <property type="evidence" value="ECO:0000318"/>
    <property type="project" value="GO_Central"/>
</dbReference>
<dbReference type="GO" id="GO:0031160">
    <property type="term" value="C:spore wall"/>
    <property type="evidence" value="ECO:0000314"/>
    <property type="project" value="dictyBase"/>
</dbReference>
<dbReference type="GO" id="GO:0031982">
    <property type="term" value="C:vesicle"/>
    <property type="evidence" value="ECO:0000314"/>
    <property type="project" value="dictyBase"/>
</dbReference>
<dbReference type="GO" id="GO:0030246">
    <property type="term" value="F:carbohydrate binding"/>
    <property type="evidence" value="ECO:0000314"/>
    <property type="project" value="dictyBase"/>
</dbReference>
<dbReference type="GO" id="GO:0016936">
    <property type="term" value="F:galactoside binding"/>
    <property type="evidence" value="ECO:0000314"/>
    <property type="project" value="dictyBase"/>
</dbReference>
<dbReference type="GO" id="GO:0046872">
    <property type="term" value="F:metal ion binding"/>
    <property type="evidence" value="ECO:0007669"/>
    <property type="project" value="UniProtKB-KW"/>
</dbReference>
<dbReference type="GO" id="GO:0046871">
    <property type="term" value="F:N-acetylgalactosamine binding"/>
    <property type="evidence" value="ECO:0000314"/>
    <property type="project" value="dictyBase"/>
</dbReference>
<dbReference type="GO" id="GO:0070492">
    <property type="term" value="F:oligosaccharide binding"/>
    <property type="evidence" value="ECO:0000314"/>
    <property type="project" value="dictyBase"/>
</dbReference>
<dbReference type="GO" id="GO:0030247">
    <property type="term" value="F:polysaccharide binding"/>
    <property type="evidence" value="ECO:0000314"/>
    <property type="project" value="dictyBase"/>
</dbReference>
<dbReference type="GO" id="GO:0140582">
    <property type="term" value="P:adenylate cyclase-activating G protein-coupled cAMP receptor signaling pathway"/>
    <property type="evidence" value="ECO:0000314"/>
    <property type="project" value="dictyBase"/>
</dbReference>
<dbReference type="GO" id="GO:0007155">
    <property type="term" value="P:cell adhesion"/>
    <property type="evidence" value="ECO:0000314"/>
    <property type="project" value="dictyBase"/>
</dbReference>
<dbReference type="GO" id="GO:0098609">
    <property type="term" value="P:cell-cell adhesion"/>
    <property type="evidence" value="ECO:0000314"/>
    <property type="project" value="dictyBase"/>
</dbReference>
<dbReference type="GO" id="GO:0007010">
    <property type="term" value="P:cytoskeleton organization"/>
    <property type="evidence" value="ECO:0000315"/>
    <property type="project" value="dictyBase"/>
</dbReference>
<dbReference type="GO" id="GO:0009617">
    <property type="term" value="P:response to bacterium"/>
    <property type="evidence" value="ECO:0007007"/>
    <property type="project" value="dictyBase"/>
</dbReference>
<dbReference type="CDD" id="cd00057">
    <property type="entry name" value="FA58C"/>
    <property type="match status" value="1"/>
</dbReference>
<dbReference type="FunFam" id="2.60.120.260:FF:000016">
    <property type="entry name" value="Contactin-associated protein-like 4 isoform 1"/>
    <property type="match status" value="1"/>
</dbReference>
<dbReference type="FunFam" id="2.60.40.2080:FF:000001">
    <property type="entry name" value="Discoidin-1 subunit A"/>
    <property type="match status" value="1"/>
</dbReference>
<dbReference type="Gene3D" id="2.60.40.2080">
    <property type="match status" value="1"/>
</dbReference>
<dbReference type="Gene3D" id="2.60.120.260">
    <property type="entry name" value="Galactose-binding domain-like"/>
    <property type="match status" value="1"/>
</dbReference>
<dbReference type="InterPro" id="IPR000421">
    <property type="entry name" value="FA58C"/>
</dbReference>
<dbReference type="InterPro" id="IPR008979">
    <property type="entry name" value="Galactose-bd-like_sf"/>
</dbReference>
<dbReference type="InterPro" id="IPR052487">
    <property type="entry name" value="Galactose-binding_lectin"/>
</dbReference>
<dbReference type="InterPro" id="IPR037221">
    <property type="entry name" value="H-type_lectin_dom_sf"/>
</dbReference>
<dbReference type="InterPro" id="IPR019019">
    <property type="entry name" value="H-type_lectin_domain"/>
</dbReference>
<dbReference type="PANTHER" id="PTHR46938">
    <property type="entry name" value="DISCOIDIN-1 SUBUNIT A-RELATED-RELATED"/>
    <property type="match status" value="1"/>
</dbReference>
<dbReference type="PANTHER" id="PTHR46938:SF2">
    <property type="entry name" value="DISCOIDIN-2"/>
    <property type="match status" value="1"/>
</dbReference>
<dbReference type="Pfam" id="PF00754">
    <property type="entry name" value="F5_F8_type_C"/>
    <property type="match status" value="1"/>
</dbReference>
<dbReference type="Pfam" id="PF09458">
    <property type="entry name" value="H_lectin"/>
    <property type="match status" value="1"/>
</dbReference>
<dbReference type="SMART" id="SM00231">
    <property type="entry name" value="FA58C"/>
    <property type="match status" value="1"/>
</dbReference>
<dbReference type="SUPFAM" id="SSF141086">
    <property type="entry name" value="Agglutinin HPA-like"/>
    <property type="match status" value="1"/>
</dbReference>
<dbReference type="SUPFAM" id="SSF49785">
    <property type="entry name" value="Galactose-binding domain-like"/>
    <property type="match status" value="1"/>
</dbReference>
<dbReference type="PROSITE" id="PS01285">
    <property type="entry name" value="FA58C_1"/>
    <property type="match status" value="1"/>
</dbReference>
<dbReference type="PROSITE" id="PS50022">
    <property type="entry name" value="FA58C_3"/>
    <property type="match status" value="1"/>
</dbReference>
<feature type="chain" id="PRO_0000079914" description="Discoidin-2">
    <location>
        <begin position="1"/>
        <end position="257"/>
    </location>
</feature>
<feature type="domain" description="F5/8 type C" evidence="2">
    <location>
        <begin position="10"/>
        <end position="154"/>
    </location>
</feature>
<feature type="region of interest" description="Beta-sandwich">
    <location>
        <begin position="1"/>
        <end position="155"/>
    </location>
</feature>
<feature type="region of interest" description="Linker">
    <location>
        <begin position="156"/>
        <end position="162"/>
    </location>
</feature>
<feature type="region of interest" description="Lectin-like">
    <location>
        <begin position="163"/>
        <end position="257"/>
    </location>
</feature>
<feature type="short sequence motif" description="Cell attachment site" evidence="1">
    <location>
        <begin position="81"/>
        <end position="83"/>
    </location>
</feature>
<feature type="binding site">
    <location>
        <position position="39"/>
    </location>
    <ligand>
        <name>Ca(2+)</name>
        <dbReference type="ChEBI" id="CHEBI:29108"/>
    </ligand>
</feature>
<feature type="binding site">
    <location>
        <position position="40"/>
    </location>
    <ligand>
        <name>Ca(2+)</name>
        <dbReference type="ChEBI" id="CHEBI:29108"/>
    </ligand>
</feature>
<feature type="binding site">
    <location>
        <position position="47"/>
    </location>
    <ligand>
        <name>Ca(2+)</name>
        <dbReference type="ChEBI" id="CHEBI:29108"/>
    </ligand>
</feature>
<feature type="binding site">
    <location>
        <position position="209"/>
    </location>
    <ligand>
        <name>a carbohydrate</name>
        <dbReference type="ChEBI" id="CHEBI:16646"/>
    </ligand>
</feature>
<feature type="binding site">
    <location>
        <position position="218"/>
    </location>
    <ligand>
        <name>a carbohydrate</name>
        <dbReference type="ChEBI" id="CHEBI:16646"/>
    </ligand>
</feature>
<feature type="binding site">
    <location>
        <position position="238"/>
    </location>
    <ligand>
        <name>a carbohydrate</name>
        <dbReference type="ChEBI" id="CHEBI:16646"/>
    </ligand>
</feature>
<feature type="modified residue" description="Phosphohistidine" evidence="4">
    <location>
        <position position="84"/>
    </location>
</feature>
<feature type="turn" evidence="5">
    <location>
        <begin position="10"/>
        <end position="14"/>
    </location>
</feature>
<feature type="strand" evidence="5">
    <location>
        <begin position="16"/>
        <end position="21"/>
    </location>
</feature>
<feature type="helix" evidence="5">
    <location>
        <begin position="26"/>
        <end position="28"/>
    </location>
</feature>
<feature type="helix" evidence="5">
    <location>
        <begin position="30"/>
        <end position="32"/>
    </location>
</feature>
<feature type="strand" evidence="5">
    <location>
        <begin position="50"/>
        <end position="53"/>
    </location>
</feature>
<feature type="strand" evidence="5">
    <location>
        <begin position="63"/>
        <end position="79"/>
    </location>
</feature>
<feature type="strand" evidence="5">
    <location>
        <begin position="82"/>
        <end position="85"/>
    </location>
</feature>
<feature type="strand" evidence="5">
    <location>
        <begin position="87"/>
        <end position="100"/>
    </location>
</feature>
<feature type="strand" evidence="5">
    <location>
        <begin position="102"/>
        <end position="104"/>
    </location>
</feature>
<feature type="helix" evidence="5">
    <location>
        <begin position="105"/>
        <end position="108"/>
    </location>
</feature>
<feature type="strand" evidence="5">
    <location>
        <begin position="115"/>
        <end position="118"/>
    </location>
</feature>
<feature type="strand" evidence="5">
    <location>
        <begin position="121"/>
        <end position="144"/>
    </location>
</feature>
<feature type="strand" evidence="5">
    <location>
        <begin position="146"/>
        <end position="153"/>
    </location>
</feature>
<feature type="strand" evidence="5">
    <location>
        <begin position="163"/>
        <end position="170"/>
    </location>
</feature>
<feature type="strand" evidence="5">
    <location>
        <begin position="180"/>
        <end position="190"/>
    </location>
</feature>
<feature type="strand" evidence="5">
    <location>
        <begin position="200"/>
        <end position="210"/>
    </location>
</feature>
<feature type="strand" evidence="5">
    <location>
        <begin position="220"/>
        <end position="225"/>
    </location>
</feature>
<feature type="strand" evidence="5">
    <location>
        <begin position="228"/>
        <end position="237"/>
    </location>
</feature>
<feature type="strand" evidence="5">
    <location>
        <begin position="243"/>
        <end position="254"/>
    </location>
</feature>
<name>DIS2_DICDI</name>
<keyword id="KW-0002">3D-structure</keyword>
<keyword id="KW-0106">Calcium</keyword>
<keyword id="KW-0130">Cell adhesion</keyword>
<keyword id="KW-0903">Direct protein sequencing</keyword>
<keyword id="KW-0430">Lectin</keyword>
<keyword id="KW-0479">Metal-binding</keyword>
<keyword id="KW-0597">Phosphoprotein</keyword>
<keyword id="KW-1185">Reference proteome</keyword>
<accession>P42530</accession>
<accession>Q54CX1</accession>
<evidence type="ECO:0000255" key="1"/>
<evidence type="ECO:0000255" key="2">
    <source>
        <dbReference type="PROSITE-ProRule" id="PRU00081"/>
    </source>
</evidence>
<evidence type="ECO:0000269" key="3">
    <source>
    </source>
</evidence>
<evidence type="ECO:0000305" key="4">
    <source>
    </source>
</evidence>
<evidence type="ECO:0007829" key="5">
    <source>
        <dbReference type="PDB" id="2VM9"/>
    </source>
</evidence>
<protein>
    <recommendedName>
        <fullName>Discoidin-2</fullName>
    </recommendedName>
    <alternativeName>
        <fullName>Discoidin II</fullName>
    </alternativeName>
</protein>
<organism>
    <name type="scientific">Dictyostelium discoideum</name>
    <name type="common">Social amoeba</name>
    <dbReference type="NCBI Taxonomy" id="44689"/>
    <lineage>
        <taxon>Eukaryota</taxon>
        <taxon>Amoebozoa</taxon>
        <taxon>Evosea</taxon>
        <taxon>Eumycetozoa</taxon>
        <taxon>Dictyostelia</taxon>
        <taxon>Dictyosteliales</taxon>
        <taxon>Dictyosteliaceae</taxon>
        <taxon>Dictyostelium</taxon>
    </lineage>
</organism>